<accession>B0K956</accession>
<protein>
    <recommendedName>
        <fullName evidence="1">Holliday junction branch migration complex subunit RuvB</fullName>
        <ecNumber evidence="1">3.6.4.-</ecNumber>
    </recommendedName>
</protein>
<gene>
    <name evidence="1" type="primary">ruvB</name>
    <name type="ordered locus">Teth39_1014</name>
</gene>
<sequence length="338" mass="37978">MEERILTQNFTQEDASEYSLRPRWLSEYIGQQKIKEELKIYIEAAKMRKEPLDHVLLYGPPGLGKTTLATVISNEMGVGIKITSGPAIEKSGDLAAILTNLQENDILFIDEIHRLNRSVEEILYPAMEDFELDIVIGKGPSARSIRLSLPRFTLIGATTRAALMTSPLRDRFGVINRLDYYSVEELKEIIKRSANILNIGIDEKAALEIAKRSRGTPRIANRLLKRVRDFAQVRGNGYIDFKTSKEALDVLGVDEIGLEYIDRKILVSIIEKFGGGPVGIDAIAASIGEDGDTIEDVYEPYLLQIGFLNRTPRGRVVTKLAYDYLKYPYIEQGRIEGV</sequence>
<comment type="function">
    <text evidence="1">The RuvA-RuvB-RuvC complex processes Holliday junction (HJ) DNA during genetic recombination and DNA repair, while the RuvA-RuvB complex plays an important role in the rescue of blocked DNA replication forks via replication fork reversal (RFR). RuvA specifically binds to HJ cruciform DNA, conferring on it an open structure. The RuvB hexamer acts as an ATP-dependent pump, pulling dsDNA into and through the RuvAB complex. RuvB forms 2 homohexamers on either side of HJ DNA bound by 1 or 2 RuvA tetramers; 4 subunits per hexamer contact DNA at a time. Coordinated motions by a converter formed by DNA-disengaged RuvB subunits stimulates ATP hydrolysis and nucleotide exchange. Immobilization of the converter enables RuvB to convert the ATP-contained energy into a lever motion, pulling 2 nucleotides of DNA out of the RuvA tetramer per ATP hydrolyzed, thus driving DNA branch migration. The RuvB motors rotate together with the DNA substrate, which together with the progressing nucleotide cycle form the mechanistic basis for DNA recombination by continuous HJ branch migration. Branch migration allows RuvC to scan DNA until it finds its consensus sequence, where it cleaves and resolves cruciform DNA.</text>
</comment>
<comment type="catalytic activity">
    <reaction evidence="1">
        <text>ATP + H2O = ADP + phosphate + H(+)</text>
        <dbReference type="Rhea" id="RHEA:13065"/>
        <dbReference type="ChEBI" id="CHEBI:15377"/>
        <dbReference type="ChEBI" id="CHEBI:15378"/>
        <dbReference type="ChEBI" id="CHEBI:30616"/>
        <dbReference type="ChEBI" id="CHEBI:43474"/>
        <dbReference type="ChEBI" id="CHEBI:456216"/>
    </reaction>
</comment>
<comment type="subunit">
    <text evidence="1">Homohexamer. Forms an RuvA(8)-RuvB(12)-Holliday junction (HJ) complex. HJ DNA is sandwiched between 2 RuvA tetramers; dsDNA enters through RuvA and exits via RuvB. An RuvB hexamer assembles on each DNA strand where it exits the tetramer. Each RuvB hexamer is contacted by two RuvA subunits (via domain III) on 2 adjacent RuvB subunits; this complex drives branch migration. In the full resolvosome a probable DNA-RuvA(4)-RuvB(12)-RuvC(2) complex forms which resolves the HJ.</text>
</comment>
<comment type="subcellular location">
    <subcellularLocation>
        <location evidence="1">Cytoplasm</location>
    </subcellularLocation>
</comment>
<comment type="domain">
    <text evidence="1">Has 3 domains, the large (RuvB-L) and small ATPase (RuvB-S) domains and the C-terminal head (RuvB-H) domain. The head domain binds DNA, while the ATPase domains jointly bind ATP, ADP or are empty depending on the state of the subunit in the translocation cycle. During a single DNA translocation step the structure of each domain remains the same, but their relative positions change.</text>
</comment>
<comment type="similarity">
    <text evidence="1">Belongs to the RuvB family.</text>
</comment>
<proteinExistence type="inferred from homology"/>
<dbReference type="EC" id="3.6.4.-" evidence="1"/>
<dbReference type="EMBL" id="CP000924">
    <property type="protein sequence ID" value="ABY94669.1"/>
    <property type="molecule type" value="Genomic_DNA"/>
</dbReference>
<dbReference type="RefSeq" id="WP_003868519.1">
    <property type="nucleotide sequence ID" value="NC_010321.1"/>
</dbReference>
<dbReference type="SMR" id="B0K956"/>
<dbReference type="STRING" id="340099.Teth39_1014"/>
<dbReference type="KEGG" id="tpd:Teth39_1014"/>
<dbReference type="eggNOG" id="COG2255">
    <property type="taxonomic scope" value="Bacteria"/>
</dbReference>
<dbReference type="HOGENOM" id="CLU_055599_1_0_9"/>
<dbReference type="Proteomes" id="UP000002156">
    <property type="component" value="Chromosome"/>
</dbReference>
<dbReference type="GO" id="GO:0005737">
    <property type="term" value="C:cytoplasm"/>
    <property type="evidence" value="ECO:0007669"/>
    <property type="project" value="UniProtKB-SubCell"/>
</dbReference>
<dbReference type="GO" id="GO:0048476">
    <property type="term" value="C:Holliday junction resolvase complex"/>
    <property type="evidence" value="ECO:0007669"/>
    <property type="project" value="UniProtKB-UniRule"/>
</dbReference>
<dbReference type="GO" id="GO:0005524">
    <property type="term" value="F:ATP binding"/>
    <property type="evidence" value="ECO:0007669"/>
    <property type="project" value="UniProtKB-UniRule"/>
</dbReference>
<dbReference type="GO" id="GO:0016887">
    <property type="term" value="F:ATP hydrolysis activity"/>
    <property type="evidence" value="ECO:0007669"/>
    <property type="project" value="InterPro"/>
</dbReference>
<dbReference type="GO" id="GO:0000400">
    <property type="term" value="F:four-way junction DNA binding"/>
    <property type="evidence" value="ECO:0007669"/>
    <property type="project" value="UniProtKB-UniRule"/>
</dbReference>
<dbReference type="GO" id="GO:0009378">
    <property type="term" value="F:four-way junction helicase activity"/>
    <property type="evidence" value="ECO:0007669"/>
    <property type="project" value="InterPro"/>
</dbReference>
<dbReference type="GO" id="GO:0006310">
    <property type="term" value="P:DNA recombination"/>
    <property type="evidence" value="ECO:0007669"/>
    <property type="project" value="UniProtKB-UniRule"/>
</dbReference>
<dbReference type="GO" id="GO:0006281">
    <property type="term" value="P:DNA repair"/>
    <property type="evidence" value="ECO:0007669"/>
    <property type="project" value="UniProtKB-UniRule"/>
</dbReference>
<dbReference type="CDD" id="cd00009">
    <property type="entry name" value="AAA"/>
    <property type="match status" value="1"/>
</dbReference>
<dbReference type="Gene3D" id="1.10.8.60">
    <property type="match status" value="1"/>
</dbReference>
<dbReference type="Gene3D" id="3.40.50.300">
    <property type="entry name" value="P-loop containing nucleotide triphosphate hydrolases"/>
    <property type="match status" value="1"/>
</dbReference>
<dbReference type="Gene3D" id="1.10.10.10">
    <property type="entry name" value="Winged helix-like DNA-binding domain superfamily/Winged helix DNA-binding domain"/>
    <property type="match status" value="1"/>
</dbReference>
<dbReference type="HAMAP" id="MF_00016">
    <property type="entry name" value="DNA_HJ_migration_RuvB"/>
    <property type="match status" value="1"/>
</dbReference>
<dbReference type="InterPro" id="IPR003593">
    <property type="entry name" value="AAA+_ATPase"/>
</dbReference>
<dbReference type="InterPro" id="IPR041445">
    <property type="entry name" value="AAA_lid_4"/>
</dbReference>
<dbReference type="InterPro" id="IPR004605">
    <property type="entry name" value="DNA_helicase_Holl-junc_RuvB"/>
</dbReference>
<dbReference type="InterPro" id="IPR027417">
    <property type="entry name" value="P-loop_NTPase"/>
</dbReference>
<dbReference type="InterPro" id="IPR008824">
    <property type="entry name" value="RuvB-like_N"/>
</dbReference>
<dbReference type="InterPro" id="IPR008823">
    <property type="entry name" value="RuvB_C"/>
</dbReference>
<dbReference type="InterPro" id="IPR036388">
    <property type="entry name" value="WH-like_DNA-bd_sf"/>
</dbReference>
<dbReference type="InterPro" id="IPR036390">
    <property type="entry name" value="WH_DNA-bd_sf"/>
</dbReference>
<dbReference type="NCBIfam" id="NF000868">
    <property type="entry name" value="PRK00080.1"/>
    <property type="match status" value="1"/>
</dbReference>
<dbReference type="NCBIfam" id="TIGR00635">
    <property type="entry name" value="ruvB"/>
    <property type="match status" value="1"/>
</dbReference>
<dbReference type="PANTHER" id="PTHR42848">
    <property type="match status" value="1"/>
</dbReference>
<dbReference type="PANTHER" id="PTHR42848:SF1">
    <property type="entry name" value="HOLLIDAY JUNCTION BRANCH MIGRATION COMPLEX SUBUNIT RUVB"/>
    <property type="match status" value="1"/>
</dbReference>
<dbReference type="Pfam" id="PF17864">
    <property type="entry name" value="AAA_lid_4"/>
    <property type="match status" value="1"/>
</dbReference>
<dbReference type="Pfam" id="PF05491">
    <property type="entry name" value="RuvB_C"/>
    <property type="match status" value="1"/>
</dbReference>
<dbReference type="Pfam" id="PF05496">
    <property type="entry name" value="RuvB_N"/>
    <property type="match status" value="1"/>
</dbReference>
<dbReference type="SMART" id="SM00382">
    <property type="entry name" value="AAA"/>
    <property type="match status" value="1"/>
</dbReference>
<dbReference type="SUPFAM" id="SSF52540">
    <property type="entry name" value="P-loop containing nucleoside triphosphate hydrolases"/>
    <property type="match status" value="1"/>
</dbReference>
<dbReference type="SUPFAM" id="SSF46785">
    <property type="entry name" value="Winged helix' DNA-binding domain"/>
    <property type="match status" value="1"/>
</dbReference>
<name>RUVB_THEP3</name>
<evidence type="ECO:0000255" key="1">
    <source>
        <dbReference type="HAMAP-Rule" id="MF_00016"/>
    </source>
</evidence>
<feature type="chain" id="PRO_1000089688" description="Holliday junction branch migration complex subunit RuvB">
    <location>
        <begin position="1"/>
        <end position="338"/>
    </location>
</feature>
<feature type="region of interest" description="Large ATPase domain (RuvB-L)" evidence="1">
    <location>
        <begin position="1"/>
        <end position="181"/>
    </location>
</feature>
<feature type="region of interest" description="Small ATPAse domain (RuvB-S)" evidence="1">
    <location>
        <begin position="182"/>
        <end position="252"/>
    </location>
</feature>
<feature type="region of interest" description="Head domain (RuvB-H)" evidence="1">
    <location>
        <begin position="255"/>
        <end position="338"/>
    </location>
</feature>
<feature type="binding site" evidence="1">
    <location>
        <position position="20"/>
    </location>
    <ligand>
        <name>ATP</name>
        <dbReference type="ChEBI" id="CHEBI:30616"/>
    </ligand>
</feature>
<feature type="binding site" evidence="1">
    <location>
        <position position="21"/>
    </location>
    <ligand>
        <name>ATP</name>
        <dbReference type="ChEBI" id="CHEBI:30616"/>
    </ligand>
</feature>
<feature type="binding site" evidence="1">
    <location>
        <position position="62"/>
    </location>
    <ligand>
        <name>ATP</name>
        <dbReference type="ChEBI" id="CHEBI:30616"/>
    </ligand>
</feature>
<feature type="binding site" evidence="1">
    <location>
        <position position="65"/>
    </location>
    <ligand>
        <name>ATP</name>
        <dbReference type="ChEBI" id="CHEBI:30616"/>
    </ligand>
</feature>
<feature type="binding site" evidence="1">
    <location>
        <position position="66"/>
    </location>
    <ligand>
        <name>ATP</name>
        <dbReference type="ChEBI" id="CHEBI:30616"/>
    </ligand>
</feature>
<feature type="binding site" evidence="1">
    <location>
        <position position="66"/>
    </location>
    <ligand>
        <name>Mg(2+)</name>
        <dbReference type="ChEBI" id="CHEBI:18420"/>
    </ligand>
</feature>
<feature type="binding site" evidence="1">
    <location>
        <position position="67"/>
    </location>
    <ligand>
        <name>ATP</name>
        <dbReference type="ChEBI" id="CHEBI:30616"/>
    </ligand>
</feature>
<feature type="binding site" evidence="1">
    <location>
        <begin position="128"/>
        <end position="130"/>
    </location>
    <ligand>
        <name>ATP</name>
        <dbReference type="ChEBI" id="CHEBI:30616"/>
    </ligand>
</feature>
<feature type="binding site" evidence="1">
    <location>
        <position position="171"/>
    </location>
    <ligand>
        <name>ATP</name>
        <dbReference type="ChEBI" id="CHEBI:30616"/>
    </ligand>
</feature>
<feature type="binding site" evidence="1">
    <location>
        <position position="181"/>
    </location>
    <ligand>
        <name>ATP</name>
        <dbReference type="ChEBI" id="CHEBI:30616"/>
    </ligand>
</feature>
<feature type="binding site" evidence="1">
    <location>
        <position position="218"/>
    </location>
    <ligand>
        <name>ATP</name>
        <dbReference type="ChEBI" id="CHEBI:30616"/>
    </ligand>
</feature>
<feature type="binding site" evidence="1">
    <location>
        <position position="310"/>
    </location>
    <ligand>
        <name>DNA</name>
        <dbReference type="ChEBI" id="CHEBI:16991"/>
    </ligand>
</feature>
<feature type="binding site" evidence="1">
    <location>
        <position position="315"/>
    </location>
    <ligand>
        <name>DNA</name>
        <dbReference type="ChEBI" id="CHEBI:16991"/>
    </ligand>
</feature>
<organism>
    <name type="scientific">Thermoanaerobacter pseudethanolicus (strain ATCC 33223 / 39E)</name>
    <name type="common">Clostridium thermohydrosulfuricum</name>
    <dbReference type="NCBI Taxonomy" id="340099"/>
    <lineage>
        <taxon>Bacteria</taxon>
        <taxon>Bacillati</taxon>
        <taxon>Bacillota</taxon>
        <taxon>Clostridia</taxon>
        <taxon>Thermoanaerobacterales</taxon>
        <taxon>Thermoanaerobacteraceae</taxon>
        <taxon>Thermoanaerobacter</taxon>
    </lineage>
</organism>
<reference key="1">
    <citation type="submission" date="2008-01" db="EMBL/GenBank/DDBJ databases">
        <title>Complete sequence of Thermoanaerobacter pseudethanolicus 39E.</title>
        <authorList>
            <person name="Copeland A."/>
            <person name="Lucas S."/>
            <person name="Lapidus A."/>
            <person name="Barry K."/>
            <person name="Glavina del Rio T."/>
            <person name="Dalin E."/>
            <person name="Tice H."/>
            <person name="Pitluck S."/>
            <person name="Bruce D."/>
            <person name="Goodwin L."/>
            <person name="Saunders E."/>
            <person name="Brettin T."/>
            <person name="Detter J.C."/>
            <person name="Han C."/>
            <person name="Schmutz J."/>
            <person name="Larimer F."/>
            <person name="Land M."/>
            <person name="Hauser L."/>
            <person name="Kyrpides N."/>
            <person name="Lykidis A."/>
            <person name="Hemme C."/>
            <person name="Fields M.W."/>
            <person name="He Z."/>
            <person name="Zhou J."/>
            <person name="Richardson P."/>
        </authorList>
    </citation>
    <scope>NUCLEOTIDE SEQUENCE [LARGE SCALE GENOMIC DNA]</scope>
    <source>
        <strain>ATCC 33223 / DSM 2355 / 39E</strain>
    </source>
</reference>
<keyword id="KW-0067">ATP-binding</keyword>
<keyword id="KW-0963">Cytoplasm</keyword>
<keyword id="KW-0227">DNA damage</keyword>
<keyword id="KW-0233">DNA recombination</keyword>
<keyword id="KW-0234">DNA repair</keyword>
<keyword id="KW-0238">DNA-binding</keyword>
<keyword id="KW-0378">Hydrolase</keyword>
<keyword id="KW-0547">Nucleotide-binding</keyword>
<keyword id="KW-1185">Reference proteome</keyword>